<dbReference type="EC" id="2.3.3.14" evidence="1 2"/>
<dbReference type="EMBL" id="AJ248284">
    <property type="protein sequence ID" value="CAB49358.1"/>
    <property type="molecule type" value="Genomic_DNA"/>
</dbReference>
<dbReference type="EMBL" id="HE613800">
    <property type="protein sequence ID" value="CCE69817.1"/>
    <property type="molecule type" value="Genomic_DNA"/>
</dbReference>
<dbReference type="PIR" id="G75159">
    <property type="entry name" value="G75159"/>
</dbReference>
<dbReference type="RefSeq" id="WP_010867559.1">
    <property type="nucleotide sequence ID" value="NC_000868.1"/>
</dbReference>
<dbReference type="SMR" id="Q9V1J1"/>
<dbReference type="STRING" id="272844.PAB0286"/>
<dbReference type="KEGG" id="pab:PAB0286"/>
<dbReference type="PATRIC" id="fig|272844.11.peg.461"/>
<dbReference type="eggNOG" id="arCOG02092">
    <property type="taxonomic scope" value="Archaea"/>
</dbReference>
<dbReference type="HOGENOM" id="CLU_022158_4_2_2"/>
<dbReference type="OrthoDB" id="6555at2157"/>
<dbReference type="PhylomeDB" id="Q9V1J1"/>
<dbReference type="UniPathway" id="UPA00033">
    <property type="reaction ID" value="UER00028"/>
</dbReference>
<dbReference type="Proteomes" id="UP000000810">
    <property type="component" value="Chromosome"/>
</dbReference>
<dbReference type="Proteomes" id="UP000009139">
    <property type="component" value="Chromosome"/>
</dbReference>
<dbReference type="GO" id="GO:0004410">
    <property type="term" value="F:homocitrate synthase activity"/>
    <property type="evidence" value="ECO:0007669"/>
    <property type="project" value="UniProtKB-UniRule"/>
</dbReference>
<dbReference type="GO" id="GO:0046872">
    <property type="term" value="F:metal ion binding"/>
    <property type="evidence" value="ECO:0007669"/>
    <property type="project" value="UniProtKB-KW"/>
</dbReference>
<dbReference type="GO" id="GO:0019878">
    <property type="term" value="P:lysine biosynthetic process via aminoadipic acid"/>
    <property type="evidence" value="ECO:0007669"/>
    <property type="project" value="UniProtKB-UniRule"/>
</dbReference>
<dbReference type="Gene3D" id="4.10.430.20">
    <property type="match status" value="1"/>
</dbReference>
<dbReference type="Gene3D" id="3.20.20.70">
    <property type="entry name" value="Aldolase class I"/>
    <property type="match status" value="1"/>
</dbReference>
<dbReference type="HAMAP" id="MF_02222">
    <property type="entry name" value="Homocitr_synth_fung_arch"/>
    <property type="match status" value="1"/>
</dbReference>
<dbReference type="InterPro" id="IPR002034">
    <property type="entry name" value="AIPM/Hcit_synth_CS"/>
</dbReference>
<dbReference type="InterPro" id="IPR013785">
    <property type="entry name" value="Aldolase_TIM"/>
</dbReference>
<dbReference type="InterPro" id="IPR011872">
    <property type="entry name" value="Homocitrate_synth"/>
</dbReference>
<dbReference type="InterPro" id="IPR054691">
    <property type="entry name" value="LeuA/HCS_post-cat"/>
</dbReference>
<dbReference type="InterPro" id="IPR000891">
    <property type="entry name" value="PYR_CT"/>
</dbReference>
<dbReference type="NCBIfam" id="TIGR02146">
    <property type="entry name" value="LysS_fung_arch"/>
    <property type="match status" value="1"/>
</dbReference>
<dbReference type="PANTHER" id="PTHR42880">
    <property type="entry name" value="HOMOCITRATE SYNTHASE"/>
    <property type="match status" value="1"/>
</dbReference>
<dbReference type="PANTHER" id="PTHR42880:SF1">
    <property type="entry name" value="ISOPROPYLMALATE_HOMOCITRATE_CITRAMALATE SYNTHASE FAMILY PROTEIN"/>
    <property type="match status" value="1"/>
</dbReference>
<dbReference type="Pfam" id="PF22617">
    <property type="entry name" value="HCS_D2"/>
    <property type="match status" value="1"/>
</dbReference>
<dbReference type="Pfam" id="PF00682">
    <property type="entry name" value="HMGL-like"/>
    <property type="match status" value="1"/>
</dbReference>
<dbReference type="SUPFAM" id="SSF51569">
    <property type="entry name" value="Aldolase"/>
    <property type="match status" value="1"/>
</dbReference>
<dbReference type="PROSITE" id="PS00816">
    <property type="entry name" value="AIPM_HOMOCIT_SYNTH_2"/>
    <property type="match status" value="1"/>
</dbReference>
<dbReference type="PROSITE" id="PS50991">
    <property type="entry name" value="PYR_CT"/>
    <property type="match status" value="1"/>
</dbReference>
<feature type="chain" id="PRO_0000140419" description="Homocitrate synthase">
    <location>
        <begin position="1"/>
        <end position="361"/>
    </location>
</feature>
<feature type="domain" description="Pyruvate carboxyltransferase" evidence="3">
    <location>
        <begin position="1"/>
        <end position="251"/>
    </location>
</feature>
<feature type="active site" description="Proton acceptor" evidence="1">
    <location>
        <position position="282"/>
    </location>
</feature>
<feature type="binding site" evidence="1">
    <location>
        <position position="8"/>
    </location>
    <ligand>
        <name>2-oxoglutarate</name>
        <dbReference type="ChEBI" id="CHEBI:16810"/>
    </ligand>
</feature>
<feature type="binding site" evidence="1">
    <location>
        <position position="9"/>
    </location>
    <ligand>
        <name>Mg(2+)</name>
        <dbReference type="ChEBI" id="CHEBI:18420"/>
    </ligand>
</feature>
<feature type="binding site" evidence="1">
    <location>
        <position position="68"/>
    </location>
    <ligand>
        <name>2-oxoglutarate</name>
        <dbReference type="ChEBI" id="CHEBI:16810"/>
    </ligand>
</feature>
<feature type="binding site" evidence="1">
    <location>
        <position position="128"/>
    </location>
    <ligand>
        <name>2-oxoglutarate</name>
        <dbReference type="ChEBI" id="CHEBI:16810"/>
    </ligand>
</feature>
<feature type="binding site" evidence="1">
    <location>
        <position position="162"/>
    </location>
    <ligand>
        <name>2-oxoglutarate</name>
        <dbReference type="ChEBI" id="CHEBI:16810"/>
    </ligand>
</feature>
<feature type="binding site" evidence="1">
    <location>
        <position position="188"/>
    </location>
    <ligand>
        <name>Mg(2+)</name>
        <dbReference type="ChEBI" id="CHEBI:18420"/>
    </ligand>
</feature>
<feature type="binding site" evidence="1">
    <location>
        <position position="190"/>
    </location>
    <ligand>
        <name>Mg(2+)</name>
        <dbReference type="ChEBI" id="CHEBI:18420"/>
    </ligand>
</feature>
<gene>
    <name type="ordered locus">PYRAB04360</name>
    <name type="ORF">PAB0286</name>
</gene>
<name>HOSA_PYRAB</name>
<keyword id="KW-0028">Amino-acid biosynthesis</keyword>
<keyword id="KW-0457">Lysine biosynthesis</keyword>
<keyword id="KW-0460">Magnesium</keyword>
<keyword id="KW-0464">Manganese</keyword>
<keyword id="KW-0479">Metal-binding</keyword>
<keyword id="KW-0808">Transferase</keyword>
<reference key="1">
    <citation type="journal article" date="2003" name="Mol. Microbiol.">
        <title>An integrated analysis of the genome of the hyperthermophilic archaeon Pyrococcus abyssi.</title>
        <authorList>
            <person name="Cohen G.N."/>
            <person name="Barbe V."/>
            <person name="Flament D."/>
            <person name="Galperin M."/>
            <person name="Heilig R."/>
            <person name="Lecompte O."/>
            <person name="Poch O."/>
            <person name="Prieur D."/>
            <person name="Querellou J."/>
            <person name="Ripp R."/>
            <person name="Thierry J.-C."/>
            <person name="Van der Oost J."/>
            <person name="Weissenbach J."/>
            <person name="Zivanovic Y."/>
            <person name="Forterre P."/>
        </authorList>
    </citation>
    <scope>NUCLEOTIDE SEQUENCE [LARGE SCALE GENOMIC DNA]</scope>
    <source>
        <strain>GE5 / Orsay</strain>
    </source>
</reference>
<reference key="2">
    <citation type="journal article" date="2012" name="Curr. Microbiol.">
        <title>Re-annotation of two hyperthermophilic archaea Pyrococcus abyssi GE5 and Pyrococcus furiosus DSM 3638.</title>
        <authorList>
            <person name="Gao J."/>
            <person name="Wang J."/>
        </authorList>
    </citation>
    <scope>GENOME REANNOTATION</scope>
    <source>
        <strain>GE5 / Orsay</strain>
    </source>
</reference>
<protein>
    <recommendedName>
        <fullName evidence="2">Homocitrate synthase</fullName>
        <shortName evidence="2">HCS</shortName>
        <ecNumber evidence="1 2">2.3.3.14</ecNumber>
    </recommendedName>
</protein>
<accession>Q9V1J1</accession>
<accession>G8ZGD8</accession>
<sequence>MVLDSTLREGEQTPGVNYTPEQRLEIAIALDEVGVDFIEIGHPAVSEDVFRGMKLIAEQGLNVELLAHSRALIEDIDYVLKTGVDWVGIFFCLSEACLRKRFRITLDHALEKISRAIEYAKDHGLKVRFTPEDTTRTEWANLKRAIRLAKELKVDRISVADTTGSTHPLRFYTLVKKIVNFGIPVNVHCHNDLGLALANAIMGIEAGATLVDATVNGLGERAGIVDLAQIITVLYYHYGIKKYRLDLLYRVSNLVSEITGISPQPNYPIVGENAFTHKAGLHVSAVLKDPRFYEFLPAEVFGRERTIYVDRYAGKDTIRYYLEKFGIRDHGIVTSLLRKVKSSREPFTWEKLLEEARRVKE</sequence>
<organism>
    <name type="scientific">Pyrococcus abyssi (strain GE5 / Orsay)</name>
    <dbReference type="NCBI Taxonomy" id="272844"/>
    <lineage>
        <taxon>Archaea</taxon>
        <taxon>Methanobacteriati</taxon>
        <taxon>Methanobacteriota</taxon>
        <taxon>Thermococci</taxon>
        <taxon>Thermococcales</taxon>
        <taxon>Thermococcaceae</taxon>
        <taxon>Pyrococcus</taxon>
    </lineage>
</organism>
<proteinExistence type="inferred from homology"/>
<evidence type="ECO:0000250" key="1">
    <source>
        <dbReference type="UniProtKB" id="O87198"/>
    </source>
</evidence>
<evidence type="ECO:0000255" key="2">
    <source>
        <dbReference type="HAMAP-Rule" id="MF_02222"/>
    </source>
</evidence>
<evidence type="ECO:0000255" key="3">
    <source>
        <dbReference type="PROSITE-ProRule" id="PRU01151"/>
    </source>
</evidence>
<comment type="function">
    <text evidence="1">Catalyzes the aldol-type condensation of 2-oxoglutarate with acetyl-CoA to yield homocitrate. Carries out the first step of the alpha-aminoadipate (AAA) lysine biosynthesis pathway.</text>
</comment>
<comment type="catalytic activity">
    <reaction evidence="1">
        <text>acetyl-CoA + 2-oxoglutarate + H2O = (2R)-homocitrate + CoA + H(+)</text>
        <dbReference type="Rhea" id="RHEA:12929"/>
        <dbReference type="ChEBI" id="CHEBI:15377"/>
        <dbReference type="ChEBI" id="CHEBI:15378"/>
        <dbReference type="ChEBI" id="CHEBI:16810"/>
        <dbReference type="ChEBI" id="CHEBI:57287"/>
        <dbReference type="ChEBI" id="CHEBI:57288"/>
        <dbReference type="ChEBI" id="CHEBI:58884"/>
        <dbReference type="EC" id="2.3.3.14"/>
    </reaction>
    <physiologicalReaction direction="left-to-right" evidence="1">
        <dbReference type="Rhea" id="RHEA:12930"/>
    </physiologicalReaction>
</comment>
<comment type="cofactor">
    <cofactor evidence="1">
        <name>Mg(2+)</name>
        <dbReference type="ChEBI" id="CHEBI:18420"/>
    </cofactor>
    <cofactor evidence="1">
        <name>Mn(2+)</name>
        <dbReference type="ChEBI" id="CHEBI:29035"/>
    </cofactor>
</comment>
<comment type="pathway">
    <text evidence="1">Amino-acid biosynthesis; L-lysine biosynthesis via AAA pathway; L-alpha-aminoadipate from 2-oxoglutarate: step 1/5.</text>
</comment>
<comment type="similarity">
    <text evidence="2">Belongs to the alpha-IPM synthase/homocitrate synthase family. Homocitrate synthase LYS20/LYS21 subfamily.</text>
</comment>